<sequence length="468" mass="52234">MTQQIGVVGLAVMGKNLAWNIESRGYSVSVYNRSRQKTDEMVKESPGREIYPTYSLEEFVESLEKPRKILLMVKAGPATDATIDGLLPLLDDDDILIDGGNTNYQDTIRRNKALAESSINFIGMGVSGGEIGALTGPSLMPGGQKDAYNKVSDILDAIAAKAQDGASCVTYIGPNGAGHYVKMVHNGIEYADMQLIAESYAMMKDLLGMSHKEISQTFKEWNAGELESYLIEITGDIFNKLDDDNEALVEKILDTAGQKGTGKWTSINALELGVPLTIITESVFARFISSIKEERVTASKSLKGPKAHFEGDKKTFLEKIRKALYMSKICSYAQGFAQMRKASEDNEWNLKLGELAMIWREGCIIRAQFLQKIKDAYDNNENLQNLLLDPYFKNIVMEYQDALREVVATSVYNGVPTPGFSASINYYDSYRSEDLPANLIQAQRDYFGAHTYERKDREGIFHTQWVEE</sequence>
<feature type="chain" id="PRO_0000090058" description="6-phosphogluconate dehydrogenase, decarboxylating">
    <location>
        <begin position="1"/>
        <end position="468"/>
    </location>
</feature>
<feature type="active site" description="Proton acceptor" evidence="1">
    <location>
        <position position="182"/>
    </location>
</feature>
<feature type="active site" description="Proton donor" evidence="1">
    <location>
        <position position="189"/>
    </location>
</feature>
<feature type="binding site" evidence="1">
    <location>
        <begin position="9"/>
        <end position="14"/>
    </location>
    <ligand>
        <name>NADP(+)</name>
        <dbReference type="ChEBI" id="CHEBI:58349"/>
    </ligand>
</feature>
<feature type="binding site" evidence="1">
    <location>
        <begin position="32"/>
        <end position="34"/>
    </location>
    <ligand>
        <name>NADP(+)</name>
        <dbReference type="ChEBI" id="CHEBI:58349"/>
    </ligand>
</feature>
<feature type="binding site" evidence="1">
    <location>
        <begin position="73"/>
        <end position="75"/>
    </location>
    <ligand>
        <name>NADP(+)</name>
        <dbReference type="ChEBI" id="CHEBI:58349"/>
    </ligand>
</feature>
<feature type="binding site" evidence="1">
    <location>
        <position position="101"/>
    </location>
    <ligand>
        <name>NADP(+)</name>
        <dbReference type="ChEBI" id="CHEBI:58349"/>
    </ligand>
</feature>
<feature type="binding site" description="in other chain" evidence="1">
    <location>
        <position position="101"/>
    </location>
    <ligand>
        <name>substrate</name>
        <note>ligand shared between dimeric partners</note>
    </ligand>
</feature>
<feature type="binding site" description="in other chain" evidence="1">
    <location>
        <begin position="127"/>
        <end position="129"/>
    </location>
    <ligand>
        <name>substrate</name>
        <note>ligand shared between dimeric partners</note>
    </ligand>
</feature>
<feature type="binding site" description="in other chain" evidence="1">
    <location>
        <begin position="185"/>
        <end position="186"/>
    </location>
    <ligand>
        <name>substrate</name>
        <note>ligand shared between dimeric partners</note>
    </ligand>
</feature>
<feature type="binding site" description="in other chain" evidence="1">
    <location>
        <position position="190"/>
    </location>
    <ligand>
        <name>substrate</name>
        <note>ligand shared between dimeric partners</note>
    </ligand>
</feature>
<feature type="binding site" description="in other chain" evidence="1">
    <location>
        <position position="259"/>
    </location>
    <ligand>
        <name>substrate</name>
        <note>ligand shared between dimeric partners</note>
    </ligand>
</feature>
<feature type="binding site" description="in other chain" evidence="1">
    <location>
        <position position="286"/>
    </location>
    <ligand>
        <name>substrate</name>
        <note>ligand shared between dimeric partners</note>
    </ligand>
</feature>
<feature type="binding site" evidence="1">
    <location>
        <position position="444"/>
    </location>
    <ligand>
        <name>substrate</name>
        <note>ligand shared between dimeric partners</note>
    </ligand>
</feature>
<feature type="binding site" evidence="1">
    <location>
        <position position="450"/>
    </location>
    <ligand>
        <name>substrate</name>
        <note>ligand shared between dimeric partners</note>
    </ligand>
</feature>
<protein>
    <recommendedName>
        <fullName>6-phosphogluconate dehydrogenase, decarboxylating</fullName>
        <ecNumber>1.1.1.44</ecNumber>
    </recommendedName>
</protein>
<reference key="1">
    <citation type="journal article" date="2003" name="Mol. Microbiol.">
        <title>Genome-based analysis of virulence genes in a non-biofilm-forming Staphylococcus epidermidis strain (ATCC 12228).</title>
        <authorList>
            <person name="Zhang Y.-Q."/>
            <person name="Ren S.-X."/>
            <person name="Li H.-L."/>
            <person name="Wang Y.-X."/>
            <person name="Fu G."/>
            <person name="Yang J."/>
            <person name="Qin Z.-Q."/>
            <person name="Miao Y.-G."/>
            <person name="Wang W.-Y."/>
            <person name="Chen R.-S."/>
            <person name="Shen Y."/>
            <person name="Chen Z."/>
            <person name="Yuan Z.-H."/>
            <person name="Zhao G.-P."/>
            <person name="Qu D."/>
            <person name="Danchin A."/>
            <person name="Wen Y.-M."/>
        </authorList>
    </citation>
    <scope>NUCLEOTIDE SEQUENCE [LARGE SCALE GENOMIC DNA]</scope>
    <source>
        <strain>ATCC 12228 / FDA PCI 1200</strain>
    </source>
</reference>
<name>6PGD_STAES</name>
<comment type="function">
    <text evidence="1">Catalyzes the oxidative decarboxylation of 6-phosphogluconate to ribulose 5-phosphate and CO(2), with concomitant reduction of NADP to NADPH.</text>
</comment>
<comment type="catalytic activity">
    <reaction>
        <text>6-phospho-D-gluconate + NADP(+) = D-ribulose 5-phosphate + CO2 + NADPH</text>
        <dbReference type="Rhea" id="RHEA:10116"/>
        <dbReference type="ChEBI" id="CHEBI:16526"/>
        <dbReference type="ChEBI" id="CHEBI:57783"/>
        <dbReference type="ChEBI" id="CHEBI:58121"/>
        <dbReference type="ChEBI" id="CHEBI:58349"/>
        <dbReference type="ChEBI" id="CHEBI:58759"/>
        <dbReference type="EC" id="1.1.1.44"/>
    </reaction>
</comment>
<comment type="pathway">
    <text>Carbohydrate degradation; pentose phosphate pathway; D-ribulose 5-phosphate from D-glucose 6-phosphate (oxidative stage): step 3/3.</text>
</comment>
<comment type="subunit">
    <text evidence="1">Homodimer.</text>
</comment>
<comment type="similarity">
    <text evidence="2">Belongs to the 6-phosphogluconate dehydrogenase family.</text>
</comment>
<organism>
    <name type="scientific">Staphylococcus epidermidis (strain ATCC 12228 / FDA PCI 1200)</name>
    <dbReference type="NCBI Taxonomy" id="176280"/>
    <lineage>
        <taxon>Bacteria</taxon>
        <taxon>Bacillati</taxon>
        <taxon>Bacillota</taxon>
        <taxon>Bacilli</taxon>
        <taxon>Bacillales</taxon>
        <taxon>Staphylococcaceae</taxon>
        <taxon>Staphylococcus</taxon>
    </lineage>
</organism>
<gene>
    <name type="primary">gnd</name>
    <name type="ordered locus">SE_1192</name>
</gene>
<dbReference type="EC" id="1.1.1.44"/>
<dbReference type="EMBL" id="AE015929">
    <property type="protein sequence ID" value="AAO04791.1"/>
    <property type="molecule type" value="Genomic_DNA"/>
</dbReference>
<dbReference type="RefSeq" id="NP_764747.1">
    <property type="nucleotide sequence ID" value="NC_004461.1"/>
</dbReference>
<dbReference type="SMR" id="Q8CP47"/>
<dbReference type="KEGG" id="sep:SE_1192"/>
<dbReference type="PATRIC" id="fig|176280.10.peg.1162"/>
<dbReference type="eggNOG" id="COG0362">
    <property type="taxonomic scope" value="Bacteria"/>
</dbReference>
<dbReference type="HOGENOM" id="CLU_024540_4_2_9"/>
<dbReference type="OrthoDB" id="9804542at2"/>
<dbReference type="UniPathway" id="UPA00115">
    <property type="reaction ID" value="UER00410"/>
</dbReference>
<dbReference type="Proteomes" id="UP000001411">
    <property type="component" value="Chromosome"/>
</dbReference>
<dbReference type="GO" id="GO:0050661">
    <property type="term" value="F:NADP binding"/>
    <property type="evidence" value="ECO:0007669"/>
    <property type="project" value="InterPro"/>
</dbReference>
<dbReference type="GO" id="GO:0004616">
    <property type="term" value="F:phosphogluconate dehydrogenase (decarboxylating) activity"/>
    <property type="evidence" value="ECO:0007669"/>
    <property type="project" value="UniProtKB-EC"/>
</dbReference>
<dbReference type="GO" id="GO:0019521">
    <property type="term" value="P:D-gluconate metabolic process"/>
    <property type="evidence" value="ECO:0007669"/>
    <property type="project" value="UniProtKB-KW"/>
</dbReference>
<dbReference type="GO" id="GO:0016054">
    <property type="term" value="P:organic acid catabolic process"/>
    <property type="evidence" value="ECO:0007669"/>
    <property type="project" value="UniProtKB-ARBA"/>
</dbReference>
<dbReference type="GO" id="GO:0006098">
    <property type="term" value="P:pentose-phosphate shunt"/>
    <property type="evidence" value="ECO:0007669"/>
    <property type="project" value="UniProtKB-UniPathway"/>
</dbReference>
<dbReference type="FunFam" id="1.10.1040.10:FF:000002">
    <property type="entry name" value="6-phosphogluconate dehydrogenase, decarboxylating"/>
    <property type="match status" value="1"/>
</dbReference>
<dbReference type="FunFam" id="1.20.5.320:FF:000001">
    <property type="entry name" value="6-phosphogluconate dehydrogenase, decarboxylating"/>
    <property type="match status" value="1"/>
</dbReference>
<dbReference type="FunFam" id="3.40.50.720:FF:000007">
    <property type="entry name" value="6-phosphogluconate dehydrogenase, decarboxylating"/>
    <property type="match status" value="1"/>
</dbReference>
<dbReference type="Gene3D" id="1.20.5.320">
    <property type="entry name" value="6-Phosphogluconate Dehydrogenase, domain 3"/>
    <property type="match status" value="1"/>
</dbReference>
<dbReference type="Gene3D" id="1.10.1040.10">
    <property type="entry name" value="N-(1-d-carboxylethyl)-l-norvaline Dehydrogenase, domain 2"/>
    <property type="match status" value="1"/>
</dbReference>
<dbReference type="Gene3D" id="3.40.50.720">
    <property type="entry name" value="NAD(P)-binding Rossmann-like Domain"/>
    <property type="match status" value="1"/>
</dbReference>
<dbReference type="InterPro" id="IPR008927">
    <property type="entry name" value="6-PGluconate_DH-like_C_sf"/>
</dbReference>
<dbReference type="InterPro" id="IPR013328">
    <property type="entry name" value="6PGD_dom2"/>
</dbReference>
<dbReference type="InterPro" id="IPR006114">
    <property type="entry name" value="6PGDH_C"/>
</dbReference>
<dbReference type="InterPro" id="IPR006113">
    <property type="entry name" value="6PGDH_Gnd/GntZ"/>
</dbReference>
<dbReference type="InterPro" id="IPR006115">
    <property type="entry name" value="6PGDH_NADP-bd"/>
</dbReference>
<dbReference type="InterPro" id="IPR006184">
    <property type="entry name" value="6PGdom_BS"/>
</dbReference>
<dbReference type="InterPro" id="IPR036291">
    <property type="entry name" value="NAD(P)-bd_dom_sf"/>
</dbReference>
<dbReference type="InterPro" id="IPR006183">
    <property type="entry name" value="Pgluconate_DH"/>
</dbReference>
<dbReference type="NCBIfam" id="TIGR00873">
    <property type="entry name" value="gnd"/>
    <property type="match status" value="1"/>
</dbReference>
<dbReference type="NCBIfam" id="NF006765">
    <property type="entry name" value="PRK09287.1"/>
    <property type="match status" value="1"/>
</dbReference>
<dbReference type="PANTHER" id="PTHR11811">
    <property type="entry name" value="6-PHOSPHOGLUCONATE DEHYDROGENASE"/>
    <property type="match status" value="1"/>
</dbReference>
<dbReference type="Pfam" id="PF00393">
    <property type="entry name" value="6PGD"/>
    <property type="match status" value="1"/>
</dbReference>
<dbReference type="Pfam" id="PF03446">
    <property type="entry name" value="NAD_binding_2"/>
    <property type="match status" value="1"/>
</dbReference>
<dbReference type="PIRSF" id="PIRSF000109">
    <property type="entry name" value="6PGD"/>
    <property type="match status" value="1"/>
</dbReference>
<dbReference type="PRINTS" id="PR00076">
    <property type="entry name" value="6PGDHDRGNASE"/>
</dbReference>
<dbReference type="SMART" id="SM01350">
    <property type="entry name" value="6PGD"/>
    <property type="match status" value="1"/>
</dbReference>
<dbReference type="SUPFAM" id="SSF48179">
    <property type="entry name" value="6-phosphogluconate dehydrogenase C-terminal domain-like"/>
    <property type="match status" value="1"/>
</dbReference>
<dbReference type="SUPFAM" id="SSF51735">
    <property type="entry name" value="NAD(P)-binding Rossmann-fold domains"/>
    <property type="match status" value="1"/>
</dbReference>
<dbReference type="PROSITE" id="PS00461">
    <property type="entry name" value="6PGD"/>
    <property type="match status" value="1"/>
</dbReference>
<accession>Q8CP47</accession>
<evidence type="ECO:0000250" key="1"/>
<evidence type="ECO:0000305" key="2"/>
<proteinExistence type="inferred from homology"/>
<keyword id="KW-0311">Gluconate utilization</keyword>
<keyword id="KW-0521">NADP</keyword>
<keyword id="KW-0560">Oxidoreductase</keyword>
<keyword id="KW-0570">Pentose shunt</keyword>